<organism>
    <name type="scientific">Brucella canis (strain ATCC 23365 / NCTC 10854 / RM-666)</name>
    <dbReference type="NCBI Taxonomy" id="483179"/>
    <lineage>
        <taxon>Bacteria</taxon>
        <taxon>Pseudomonadati</taxon>
        <taxon>Pseudomonadota</taxon>
        <taxon>Alphaproteobacteria</taxon>
        <taxon>Hyphomicrobiales</taxon>
        <taxon>Brucellaceae</taxon>
        <taxon>Brucella/Ochrobactrum group</taxon>
        <taxon>Brucella</taxon>
    </lineage>
</organism>
<keyword id="KW-0963">Cytoplasm</keyword>
<keyword id="KW-0489">Methyltransferase</keyword>
<keyword id="KW-1185">Reference proteome</keyword>
<keyword id="KW-0698">rRNA processing</keyword>
<keyword id="KW-0949">S-adenosyl-L-methionine</keyword>
<keyword id="KW-0808">Transferase</keyword>
<dbReference type="EC" id="2.1.1.166" evidence="1"/>
<dbReference type="EMBL" id="CP000873">
    <property type="protein sequence ID" value="ABX63855.1"/>
    <property type="molecule type" value="Genomic_DNA"/>
</dbReference>
<dbReference type="RefSeq" id="WP_002965955.1">
    <property type="nucleotide sequence ID" value="NC_010104.1"/>
</dbReference>
<dbReference type="SMR" id="A9MBW8"/>
<dbReference type="KEGG" id="bcs:BCAN_B0684"/>
<dbReference type="HOGENOM" id="CLU_009422_4_0_5"/>
<dbReference type="PhylomeDB" id="A9MBW8"/>
<dbReference type="Proteomes" id="UP000001385">
    <property type="component" value="Chromosome II"/>
</dbReference>
<dbReference type="GO" id="GO:0005737">
    <property type="term" value="C:cytoplasm"/>
    <property type="evidence" value="ECO:0007669"/>
    <property type="project" value="UniProtKB-SubCell"/>
</dbReference>
<dbReference type="GO" id="GO:0008650">
    <property type="term" value="F:rRNA (uridine-2'-O-)-methyltransferase activity"/>
    <property type="evidence" value="ECO:0007669"/>
    <property type="project" value="UniProtKB-UniRule"/>
</dbReference>
<dbReference type="Gene3D" id="3.40.50.150">
    <property type="entry name" value="Vaccinia Virus protein VP39"/>
    <property type="match status" value="1"/>
</dbReference>
<dbReference type="HAMAP" id="MF_01547">
    <property type="entry name" value="RNA_methyltr_E"/>
    <property type="match status" value="1"/>
</dbReference>
<dbReference type="InterPro" id="IPR050082">
    <property type="entry name" value="RNA_methyltr_RlmE"/>
</dbReference>
<dbReference type="InterPro" id="IPR002877">
    <property type="entry name" value="RNA_MeTrfase_FtsJ_dom"/>
</dbReference>
<dbReference type="InterPro" id="IPR015507">
    <property type="entry name" value="rRNA-MeTfrase_E"/>
</dbReference>
<dbReference type="InterPro" id="IPR029063">
    <property type="entry name" value="SAM-dependent_MTases_sf"/>
</dbReference>
<dbReference type="PANTHER" id="PTHR10920">
    <property type="entry name" value="RIBOSOMAL RNA METHYLTRANSFERASE"/>
    <property type="match status" value="1"/>
</dbReference>
<dbReference type="PANTHER" id="PTHR10920:SF18">
    <property type="entry name" value="RRNA METHYLTRANSFERASE 2, MITOCHONDRIAL"/>
    <property type="match status" value="1"/>
</dbReference>
<dbReference type="Pfam" id="PF01728">
    <property type="entry name" value="FtsJ"/>
    <property type="match status" value="1"/>
</dbReference>
<dbReference type="PIRSF" id="PIRSF005461">
    <property type="entry name" value="23S_rRNA_mtase"/>
    <property type="match status" value="1"/>
</dbReference>
<dbReference type="SUPFAM" id="SSF53335">
    <property type="entry name" value="S-adenosyl-L-methionine-dependent methyltransferases"/>
    <property type="match status" value="1"/>
</dbReference>
<sequence>MSKAGGNKGGSRTGGRGGAGSSNLHVRVKKKAGTIKESSRRWLERHLNDPYVHKSRQDGYRSRAAYKLIEINDRYNLLKKGQKIIDLGAAPGGWSQIAARIVGSTDENPQVVGIDYLHVDPLPGVILLEMDFLDDEAPQKLMDALGDKPDLVISDMAAPTTGHRRTDHLRTVHLCEVAADFAVSVLKPGGHFLTKTFQGGTENELLALLKQKFRSVHHVKPPASRAESVELYLLARDFKG</sequence>
<name>RLME_BRUC2</name>
<comment type="function">
    <text evidence="1">Specifically methylates the uridine in position 2552 of 23S rRNA at the 2'-O position of the ribose in the fully assembled 50S ribosomal subunit.</text>
</comment>
<comment type="catalytic activity">
    <reaction evidence="1">
        <text>uridine(2552) in 23S rRNA + S-adenosyl-L-methionine = 2'-O-methyluridine(2552) in 23S rRNA + S-adenosyl-L-homocysteine + H(+)</text>
        <dbReference type="Rhea" id="RHEA:42720"/>
        <dbReference type="Rhea" id="RHEA-COMP:10202"/>
        <dbReference type="Rhea" id="RHEA-COMP:10203"/>
        <dbReference type="ChEBI" id="CHEBI:15378"/>
        <dbReference type="ChEBI" id="CHEBI:57856"/>
        <dbReference type="ChEBI" id="CHEBI:59789"/>
        <dbReference type="ChEBI" id="CHEBI:65315"/>
        <dbReference type="ChEBI" id="CHEBI:74478"/>
        <dbReference type="EC" id="2.1.1.166"/>
    </reaction>
</comment>
<comment type="subcellular location">
    <subcellularLocation>
        <location evidence="1">Cytoplasm</location>
    </subcellularLocation>
</comment>
<comment type="similarity">
    <text evidence="1">Belongs to the class I-like SAM-binding methyltransferase superfamily. RNA methyltransferase RlmE family.</text>
</comment>
<feature type="chain" id="PRO_1000087673" description="Ribosomal RNA large subunit methyltransferase E">
    <location>
        <begin position="1"/>
        <end position="240"/>
    </location>
</feature>
<feature type="region of interest" description="Disordered" evidence="2">
    <location>
        <begin position="1"/>
        <end position="33"/>
    </location>
</feature>
<feature type="compositionally biased region" description="Gly residues" evidence="2">
    <location>
        <begin position="1"/>
        <end position="20"/>
    </location>
</feature>
<feature type="active site" description="Proton acceptor" evidence="1">
    <location>
        <position position="195"/>
    </location>
</feature>
<feature type="binding site" evidence="1">
    <location>
        <position position="92"/>
    </location>
    <ligand>
        <name>S-adenosyl-L-methionine</name>
        <dbReference type="ChEBI" id="CHEBI:59789"/>
    </ligand>
</feature>
<feature type="binding site" evidence="1">
    <location>
        <position position="94"/>
    </location>
    <ligand>
        <name>S-adenosyl-L-methionine</name>
        <dbReference type="ChEBI" id="CHEBI:59789"/>
    </ligand>
</feature>
<feature type="binding site" evidence="1">
    <location>
        <position position="115"/>
    </location>
    <ligand>
        <name>S-adenosyl-L-methionine</name>
        <dbReference type="ChEBI" id="CHEBI:59789"/>
    </ligand>
</feature>
<feature type="binding site" evidence="1">
    <location>
        <position position="131"/>
    </location>
    <ligand>
        <name>S-adenosyl-L-methionine</name>
        <dbReference type="ChEBI" id="CHEBI:59789"/>
    </ligand>
</feature>
<feature type="binding site" evidence="1">
    <location>
        <position position="155"/>
    </location>
    <ligand>
        <name>S-adenosyl-L-methionine</name>
        <dbReference type="ChEBI" id="CHEBI:59789"/>
    </ligand>
</feature>
<accession>A9MBW8</accession>
<protein>
    <recommendedName>
        <fullName evidence="1">Ribosomal RNA large subunit methyltransferase E</fullName>
        <ecNumber evidence="1">2.1.1.166</ecNumber>
    </recommendedName>
    <alternativeName>
        <fullName evidence="1">23S rRNA Um2552 methyltransferase</fullName>
    </alternativeName>
    <alternativeName>
        <fullName evidence="1">rRNA (uridine-2'-O-)-methyltransferase</fullName>
    </alternativeName>
</protein>
<reference key="1">
    <citation type="submission" date="2007-10" db="EMBL/GenBank/DDBJ databases">
        <title>Brucella canis ATCC 23365 whole genome shotgun sequencing project.</title>
        <authorList>
            <person name="Setubal J.C."/>
            <person name="Bowns C."/>
            <person name="Boyle S."/>
            <person name="Crasta O.R."/>
            <person name="Czar M.J."/>
            <person name="Dharmanolla C."/>
            <person name="Gillespie J.J."/>
            <person name="Kenyon R.W."/>
            <person name="Lu J."/>
            <person name="Mane S."/>
            <person name="Mohapatra S."/>
            <person name="Nagrani S."/>
            <person name="Purkayastha A."/>
            <person name="Rajasimha H.K."/>
            <person name="Shallom J.M."/>
            <person name="Shallom S."/>
            <person name="Shukla M."/>
            <person name="Snyder E.E."/>
            <person name="Sobral B.W."/>
            <person name="Wattam A.R."/>
            <person name="Will R."/>
            <person name="Williams K."/>
            <person name="Yoo H."/>
            <person name="Bruce D."/>
            <person name="Detter C."/>
            <person name="Munk C."/>
            <person name="Brettin T.S."/>
        </authorList>
    </citation>
    <scope>NUCLEOTIDE SEQUENCE [LARGE SCALE GENOMIC DNA]</scope>
    <source>
        <strain>ATCC 23365 / NCTC 10854 / RM-666</strain>
    </source>
</reference>
<proteinExistence type="inferred from homology"/>
<gene>
    <name evidence="1" type="primary">rlmE</name>
    <name evidence="1" type="synonym">ftsJ</name>
    <name evidence="1" type="synonym">rrmJ</name>
    <name type="ordered locus">BCAN_B0684</name>
</gene>
<evidence type="ECO:0000255" key="1">
    <source>
        <dbReference type="HAMAP-Rule" id="MF_01547"/>
    </source>
</evidence>
<evidence type="ECO:0000256" key="2">
    <source>
        <dbReference type="SAM" id="MobiDB-lite"/>
    </source>
</evidence>